<comment type="function">
    <text evidence="1">Methyltransferase required for the conversion of demethylmenaquinol (DMKH2) to menaquinol (MKH2) and the conversion of 2-polyprenyl-6-methoxy-1,4-benzoquinol (DDMQH2) to 2-polyprenyl-3-methyl-6-methoxy-1,4-benzoquinol (DMQH2).</text>
</comment>
<comment type="catalytic activity">
    <reaction evidence="1">
        <text>a 2-demethylmenaquinol + S-adenosyl-L-methionine = a menaquinol + S-adenosyl-L-homocysteine + H(+)</text>
        <dbReference type="Rhea" id="RHEA:42640"/>
        <dbReference type="Rhea" id="RHEA-COMP:9539"/>
        <dbReference type="Rhea" id="RHEA-COMP:9563"/>
        <dbReference type="ChEBI" id="CHEBI:15378"/>
        <dbReference type="ChEBI" id="CHEBI:18151"/>
        <dbReference type="ChEBI" id="CHEBI:55437"/>
        <dbReference type="ChEBI" id="CHEBI:57856"/>
        <dbReference type="ChEBI" id="CHEBI:59789"/>
        <dbReference type="EC" id="2.1.1.163"/>
    </reaction>
</comment>
<comment type="catalytic activity">
    <reaction evidence="1">
        <text>a 2-methoxy-6-(all-trans-polyprenyl)benzene-1,4-diol + S-adenosyl-L-methionine = a 5-methoxy-2-methyl-3-(all-trans-polyprenyl)benzene-1,4-diol + S-adenosyl-L-homocysteine + H(+)</text>
        <dbReference type="Rhea" id="RHEA:28286"/>
        <dbReference type="Rhea" id="RHEA-COMP:10858"/>
        <dbReference type="Rhea" id="RHEA-COMP:10859"/>
        <dbReference type="ChEBI" id="CHEBI:15378"/>
        <dbReference type="ChEBI" id="CHEBI:57856"/>
        <dbReference type="ChEBI" id="CHEBI:59789"/>
        <dbReference type="ChEBI" id="CHEBI:84166"/>
        <dbReference type="ChEBI" id="CHEBI:84167"/>
        <dbReference type="EC" id="2.1.1.201"/>
    </reaction>
</comment>
<comment type="pathway">
    <text evidence="1">Quinol/quinone metabolism; menaquinone biosynthesis; menaquinol from 1,4-dihydroxy-2-naphthoate: step 2/2.</text>
</comment>
<comment type="pathway">
    <text evidence="1">Cofactor biosynthesis; ubiquinone biosynthesis.</text>
</comment>
<comment type="similarity">
    <text evidence="1">Belongs to the class I-like SAM-binding methyltransferase superfamily. MenG/UbiE family.</text>
</comment>
<evidence type="ECO:0000255" key="1">
    <source>
        <dbReference type="HAMAP-Rule" id="MF_01813"/>
    </source>
</evidence>
<sequence length="250" mass="28039">MSDETSNTTHFGFRTVPEGEKAGMVHGVFTRVASKYDIMNDLMSGGVHRLWKDAMMDWLAPRPGQKLLDVAGGTGDISFRFLKRAPGAEATVCDMTESMLVEGRQRADAAQMADRLDWVVGDAMALPFASNTFDVYTISFGIRNVTRVQDALNEAYRVLKPGGRLMVLEFSQLPNPMMQWAYDRYSFNVIPVMGQIVANDRDSYQYLVESIRKFPDQETFADMIRKAGFGLVKYRNLSLGIAALHSGWKI</sequence>
<gene>
    <name evidence="1" type="primary">ubiE</name>
    <name type="ordered locus">RHOS4_29510</name>
    <name type="ordered locus">RSP_1338</name>
</gene>
<keyword id="KW-0474">Menaquinone biosynthesis</keyword>
<keyword id="KW-0489">Methyltransferase</keyword>
<keyword id="KW-1185">Reference proteome</keyword>
<keyword id="KW-0949">S-adenosyl-L-methionine</keyword>
<keyword id="KW-0808">Transferase</keyword>
<keyword id="KW-0831">Ubiquinone biosynthesis</keyword>
<feature type="chain" id="PRO_1000187796" description="Ubiquinone/menaquinone biosynthesis C-methyltransferase UbiE">
    <location>
        <begin position="1"/>
        <end position="250"/>
    </location>
</feature>
<feature type="binding site" evidence="1">
    <location>
        <position position="74"/>
    </location>
    <ligand>
        <name>S-adenosyl-L-methionine</name>
        <dbReference type="ChEBI" id="CHEBI:59789"/>
    </ligand>
</feature>
<feature type="binding site" evidence="1">
    <location>
        <position position="94"/>
    </location>
    <ligand>
        <name>S-adenosyl-L-methionine</name>
        <dbReference type="ChEBI" id="CHEBI:59789"/>
    </ligand>
</feature>
<feature type="binding site" evidence="1">
    <location>
        <begin position="122"/>
        <end position="123"/>
    </location>
    <ligand>
        <name>S-adenosyl-L-methionine</name>
        <dbReference type="ChEBI" id="CHEBI:59789"/>
    </ligand>
</feature>
<feature type="binding site" evidence="1">
    <location>
        <position position="139"/>
    </location>
    <ligand>
        <name>S-adenosyl-L-methionine</name>
        <dbReference type="ChEBI" id="CHEBI:59789"/>
    </ligand>
</feature>
<dbReference type="EC" id="2.1.1.163" evidence="1"/>
<dbReference type="EC" id="2.1.1.201" evidence="1"/>
<dbReference type="EMBL" id="CP000143">
    <property type="protein sequence ID" value="ABA80519.1"/>
    <property type="molecule type" value="Genomic_DNA"/>
</dbReference>
<dbReference type="RefSeq" id="WP_002721909.1">
    <property type="nucleotide sequence ID" value="NZ_CP030271.1"/>
</dbReference>
<dbReference type="RefSeq" id="YP_354420.1">
    <property type="nucleotide sequence ID" value="NC_007493.2"/>
</dbReference>
<dbReference type="SMR" id="Q3IY65"/>
<dbReference type="STRING" id="272943.RSP_1338"/>
<dbReference type="EnsemblBacteria" id="ABA80519">
    <property type="protein sequence ID" value="ABA80519"/>
    <property type="gene ID" value="RSP_1338"/>
</dbReference>
<dbReference type="GeneID" id="67448109"/>
<dbReference type="KEGG" id="rsp:RSP_1338"/>
<dbReference type="PATRIC" id="fig|272943.9.peg.3320"/>
<dbReference type="eggNOG" id="COG2226">
    <property type="taxonomic scope" value="Bacteria"/>
</dbReference>
<dbReference type="OrthoDB" id="9808140at2"/>
<dbReference type="PhylomeDB" id="Q3IY65"/>
<dbReference type="BioCyc" id="MetaCyc:MONOMER-20135"/>
<dbReference type="UniPathway" id="UPA00079">
    <property type="reaction ID" value="UER00169"/>
</dbReference>
<dbReference type="UniPathway" id="UPA00232"/>
<dbReference type="Proteomes" id="UP000002703">
    <property type="component" value="Chromosome 1"/>
</dbReference>
<dbReference type="GO" id="GO:0008425">
    <property type="term" value="F:2-methoxy-6-polyprenyl-1,4-benzoquinol methyltransferase activity"/>
    <property type="evidence" value="ECO:0007669"/>
    <property type="project" value="UniProtKB-UniRule"/>
</dbReference>
<dbReference type="GO" id="GO:0043770">
    <property type="term" value="F:demethylmenaquinone methyltransferase activity"/>
    <property type="evidence" value="ECO:0007669"/>
    <property type="project" value="UniProtKB-UniRule"/>
</dbReference>
<dbReference type="GO" id="GO:0009060">
    <property type="term" value="P:aerobic respiration"/>
    <property type="evidence" value="ECO:0007669"/>
    <property type="project" value="UniProtKB-UniRule"/>
</dbReference>
<dbReference type="GO" id="GO:0009234">
    <property type="term" value="P:menaquinone biosynthetic process"/>
    <property type="evidence" value="ECO:0007669"/>
    <property type="project" value="UniProtKB-UniRule"/>
</dbReference>
<dbReference type="GO" id="GO:0032259">
    <property type="term" value="P:methylation"/>
    <property type="evidence" value="ECO:0007669"/>
    <property type="project" value="UniProtKB-KW"/>
</dbReference>
<dbReference type="CDD" id="cd02440">
    <property type="entry name" value="AdoMet_MTases"/>
    <property type="match status" value="1"/>
</dbReference>
<dbReference type="FunFam" id="3.40.50.150:FF:000064">
    <property type="entry name" value="2-methoxy-6-polyprenyl-1,4-benzoquinol methylase, mitochondrial"/>
    <property type="match status" value="1"/>
</dbReference>
<dbReference type="Gene3D" id="3.40.50.150">
    <property type="entry name" value="Vaccinia Virus protein VP39"/>
    <property type="match status" value="1"/>
</dbReference>
<dbReference type="HAMAP" id="MF_01813">
    <property type="entry name" value="MenG_UbiE_methyltr"/>
    <property type="match status" value="1"/>
</dbReference>
<dbReference type="InterPro" id="IPR029063">
    <property type="entry name" value="SAM-dependent_MTases_sf"/>
</dbReference>
<dbReference type="InterPro" id="IPR004033">
    <property type="entry name" value="UbiE/COQ5_MeTrFase"/>
</dbReference>
<dbReference type="InterPro" id="IPR023576">
    <property type="entry name" value="UbiE/COQ5_MeTrFase_CS"/>
</dbReference>
<dbReference type="NCBIfam" id="TIGR01934">
    <property type="entry name" value="MenG_MenH_UbiE"/>
    <property type="match status" value="1"/>
</dbReference>
<dbReference type="NCBIfam" id="NF001242">
    <property type="entry name" value="PRK00216.1-3"/>
    <property type="match status" value="1"/>
</dbReference>
<dbReference type="NCBIfam" id="NF001244">
    <property type="entry name" value="PRK00216.1-5"/>
    <property type="match status" value="1"/>
</dbReference>
<dbReference type="PANTHER" id="PTHR43591:SF24">
    <property type="entry name" value="2-METHOXY-6-POLYPRENYL-1,4-BENZOQUINOL METHYLASE, MITOCHONDRIAL"/>
    <property type="match status" value="1"/>
</dbReference>
<dbReference type="PANTHER" id="PTHR43591">
    <property type="entry name" value="METHYLTRANSFERASE"/>
    <property type="match status" value="1"/>
</dbReference>
<dbReference type="Pfam" id="PF01209">
    <property type="entry name" value="Ubie_methyltran"/>
    <property type="match status" value="1"/>
</dbReference>
<dbReference type="SUPFAM" id="SSF53335">
    <property type="entry name" value="S-adenosyl-L-methionine-dependent methyltransferases"/>
    <property type="match status" value="1"/>
</dbReference>
<dbReference type="PROSITE" id="PS51608">
    <property type="entry name" value="SAM_MT_UBIE"/>
    <property type="match status" value="1"/>
</dbReference>
<dbReference type="PROSITE" id="PS01183">
    <property type="entry name" value="UBIE_1"/>
    <property type="match status" value="1"/>
</dbReference>
<dbReference type="PROSITE" id="PS01184">
    <property type="entry name" value="UBIE_2"/>
    <property type="match status" value="1"/>
</dbReference>
<reference key="1">
    <citation type="submission" date="2005-09" db="EMBL/GenBank/DDBJ databases">
        <title>Complete sequence of chromosome 1 of Rhodobacter sphaeroides 2.4.1.</title>
        <authorList>
            <person name="Copeland A."/>
            <person name="Lucas S."/>
            <person name="Lapidus A."/>
            <person name="Barry K."/>
            <person name="Detter J.C."/>
            <person name="Glavina T."/>
            <person name="Hammon N."/>
            <person name="Israni S."/>
            <person name="Pitluck S."/>
            <person name="Richardson P."/>
            <person name="Mackenzie C."/>
            <person name="Choudhary M."/>
            <person name="Larimer F."/>
            <person name="Hauser L.J."/>
            <person name="Land M."/>
            <person name="Donohue T.J."/>
            <person name="Kaplan S."/>
        </authorList>
    </citation>
    <scope>NUCLEOTIDE SEQUENCE [LARGE SCALE GENOMIC DNA]</scope>
    <source>
        <strain>ATCC 17023 / DSM 158 / JCM 6121 / CCUG 31486 / LMG 2827 / NBRC 12203 / NCIMB 8253 / ATH 2.4.1.</strain>
    </source>
</reference>
<organism>
    <name type="scientific">Cereibacter sphaeroides (strain ATCC 17023 / DSM 158 / JCM 6121 / CCUG 31486 / LMG 2827 / NBRC 12203 / NCIMB 8253 / ATH 2.4.1.)</name>
    <name type="common">Rhodobacter sphaeroides</name>
    <dbReference type="NCBI Taxonomy" id="272943"/>
    <lineage>
        <taxon>Bacteria</taxon>
        <taxon>Pseudomonadati</taxon>
        <taxon>Pseudomonadota</taxon>
        <taxon>Alphaproteobacteria</taxon>
        <taxon>Rhodobacterales</taxon>
        <taxon>Paracoccaceae</taxon>
        <taxon>Cereibacter</taxon>
    </lineage>
</organism>
<proteinExistence type="inferred from homology"/>
<protein>
    <recommendedName>
        <fullName evidence="1">Ubiquinone/menaquinone biosynthesis C-methyltransferase UbiE</fullName>
        <ecNumber evidence="1">2.1.1.163</ecNumber>
        <ecNumber evidence="1">2.1.1.201</ecNumber>
    </recommendedName>
    <alternativeName>
        <fullName evidence="1">2-methoxy-6-polyprenyl-1,4-benzoquinol methylase</fullName>
    </alternativeName>
    <alternativeName>
        <fullName evidence="1">Demethylmenaquinone methyltransferase</fullName>
    </alternativeName>
</protein>
<name>UBIE_CERS4</name>
<accession>Q3IY65</accession>